<gene>
    <name type="primary">DPP5</name>
    <name type="ORF">MCYG_01626</name>
</gene>
<name>DPP5_ARTOC</name>
<protein>
    <recommendedName>
        <fullName>Dipeptidyl-peptidase 5</fullName>
        <ecNumber>3.4.14.-</ecNumber>
    </recommendedName>
    <alternativeName>
        <fullName>Dipeptidyl-peptidase V</fullName>
        <shortName>DPP V</shortName>
        <shortName>DppV</shortName>
    </alternativeName>
</protein>
<organism>
    <name type="scientific">Arthroderma otae (strain ATCC MYA-4605 / CBS 113480)</name>
    <name type="common">Microsporum canis</name>
    <dbReference type="NCBI Taxonomy" id="554155"/>
    <lineage>
        <taxon>Eukaryota</taxon>
        <taxon>Fungi</taxon>
        <taxon>Dikarya</taxon>
        <taxon>Ascomycota</taxon>
        <taxon>Pezizomycotina</taxon>
        <taxon>Eurotiomycetes</taxon>
        <taxon>Eurotiomycetidae</taxon>
        <taxon>Onygenales</taxon>
        <taxon>Arthrodermataceae</taxon>
        <taxon>Microsporum</taxon>
    </lineage>
</organism>
<comment type="function">
    <text evidence="1">Extracellular dipeptidyl-peptidase which removes N-terminal dipeptides sequentially from polypeptides having unsubstituted N-termini. Contributes to pathogenicity (By similarity).</text>
</comment>
<comment type="subcellular location">
    <subcellularLocation>
        <location evidence="1">Secreted</location>
    </subcellularLocation>
</comment>
<comment type="similarity">
    <text evidence="4">Belongs to the peptidase S9C family.</text>
</comment>
<feature type="signal peptide" evidence="2">
    <location>
        <begin position="1"/>
        <end position="19"/>
    </location>
</feature>
<feature type="chain" id="PRO_0000384091" description="Dipeptidyl-peptidase 5">
    <location>
        <begin position="20"/>
        <end position="726"/>
    </location>
</feature>
<feature type="region of interest" description="Disordered" evidence="3">
    <location>
        <begin position="268"/>
        <end position="292"/>
    </location>
</feature>
<feature type="active site" description="Charge relay system" evidence="1">
    <location>
        <position position="558"/>
    </location>
</feature>
<feature type="active site" description="Charge relay system" evidence="1">
    <location>
        <position position="641"/>
    </location>
</feature>
<feature type="active site" description="Charge relay system" evidence="1">
    <location>
        <position position="673"/>
    </location>
</feature>
<feature type="glycosylation site" description="N-linked (GlcNAc...) asparagine" evidence="2">
    <location>
        <position position="96"/>
    </location>
</feature>
<feature type="glycosylation site" description="N-linked (GlcNAc...) asparagine" evidence="2">
    <location>
        <position position="252"/>
    </location>
</feature>
<feature type="glycosylation site" description="N-linked (GlcNAc...) asparagine" evidence="2">
    <location>
        <position position="485"/>
    </location>
</feature>
<feature type="glycosylation site" description="N-linked (GlcNAc...) asparagine" evidence="2">
    <location>
        <position position="605"/>
    </location>
</feature>
<feature type="glycosylation site" description="N-linked (GlcNAc...) asparagine" evidence="2">
    <location>
        <position position="699"/>
    </location>
</feature>
<proteinExistence type="inferred from homology"/>
<keyword id="KW-0031">Aminopeptidase</keyword>
<keyword id="KW-0325">Glycoprotein</keyword>
<keyword id="KW-0378">Hydrolase</keyword>
<keyword id="KW-0645">Protease</keyword>
<keyword id="KW-1185">Reference proteome</keyword>
<keyword id="KW-0964">Secreted</keyword>
<keyword id="KW-0720">Serine protease</keyword>
<keyword id="KW-0732">Signal</keyword>
<keyword id="KW-0843">Virulence</keyword>
<evidence type="ECO:0000250" key="1"/>
<evidence type="ECO:0000255" key="2"/>
<evidence type="ECO:0000256" key="3">
    <source>
        <dbReference type="SAM" id="MobiDB-lite"/>
    </source>
</evidence>
<evidence type="ECO:0000305" key="4"/>
<accession>C5FH88</accession>
<reference key="1">
    <citation type="journal article" date="2012" name="MBio">
        <title>Comparative genome analysis of Trichophyton rubrum and related dermatophytes reveals candidate genes involved in infection.</title>
        <authorList>
            <person name="Martinez D.A."/>
            <person name="Oliver B.G."/>
            <person name="Graeser Y."/>
            <person name="Goldberg J.M."/>
            <person name="Li W."/>
            <person name="Martinez-Rossi N.M."/>
            <person name="Monod M."/>
            <person name="Shelest E."/>
            <person name="Barton R.C."/>
            <person name="Birch E."/>
            <person name="Brakhage A.A."/>
            <person name="Chen Z."/>
            <person name="Gurr S.J."/>
            <person name="Heiman D."/>
            <person name="Heitman J."/>
            <person name="Kosti I."/>
            <person name="Rossi A."/>
            <person name="Saif S."/>
            <person name="Samalova M."/>
            <person name="Saunders C.W."/>
            <person name="Shea T."/>
            <person name="Summerbell R.C."/>
            <person name="Xu J."/>
            <person name="Young S."/>
            <person name="Zeng Q."/>
            <person name="Birren B.W."/>
            <person name="Cuomo C.A."/>
            <person name="White T.C."/>
        </authorList>
    </citation>
    <scope>NUCLEOTIDE SEQUENCE [LARGE SCALE GENOMIC DNA]</scope>
    <source>
        <strain>ATCC MYA-4605 / CBS 113480</strain>
    </source>
</reference>
<sequence length="726" mass="80075">MAPAKWLIASLAFASTGLAFTPEDFISAPRRGEAIPDPKGQFAVFPVSKYNFDTKDRPSGWNLLNLKTGDISVLTTDADVSEITWLGEGTNLLYVNGTDSVKGGVGIWISDAKNFGNAYKAGSIPGAFQGFKLAKSGDKINFVGYGQSTTKGDLYNEAAIEKPVSSARIYDSLFVRHWDAYVGTQFNAVFSGALTKNGNKYSFDGKLKNLVQPVKYAESPYPPFGGSGDYDLSPDGKTVAFMSKAPELPKANLTTSYIFTVPHDGSKVAEPINKRNGPRTPHGIEGASSSPVFSPDSKRIAYLQMATKNYESDRRVIHIAEVGSNKPAQRIASNWDRSPESIKWSSDGRTLYVTAEEHATGKLFTLPSDARDNHMPSAVKHDGSVSAFSFVGSSKSVLITGNSLWSNALYQIATPGRPNRKLFYANEHDPQLKGLGPNDIEPLWVDGARTKIHSWIVKPTGFDKNKVYPLAFLIHGGPQGSWGDNWSTRWNPRVWADQGYVVIAPNPTGSTGFGQKLTDDITNDWGGAPYKDLFKIWEHVRDNLKYVDTDNGIAAGASFGGFMINWIQGQELGRKFKALVSHDGTFVGSSKIGTDELFFIEHDFNGTFFEARQNYDRWDCSKPEYVAKWSTPQLVVHSDYDFRLSVAEGVGLFNVLQEKGVPSRLLNFPDESHWVTKPENSLVWHQQVLGWINKFSGINKSNPKAIKLSDCKVEVIDHEAGSYFDY</sequence>
<dbReference type="EC" id="3.4.14.-"/>
<dbReference type="EMBL" id="DS995702">
    <property type="protein sequence ID" value="EEQ28807.1"/>
    <property type="molecule type" value="Genomic_DNA"/>
</dbReference>
<dbReference type="RefSeq" id="XP_002848692.1">
    <property type="nucleotide sequence ID" value="XM_002848646.1"/>
</dbReference>
<dbReference type="SMR" id="C5FH88"/>
<dbReference type="STRING" id="554155.C5FH88"/>
<dbReference type="ESTHER" id="nanot-dpp5">
    <property type="family name" value="Prolyl_oligopeptidase_S9"/>
</dbReference>
<dbReference type="MEROPS" id="S09.012"/>
<dbReference type="GlyCosmos" id="C5FH88">
    <property type="glycosylation" value="5 sites, No reported glycans"/>
</dbReference>
<dbReference type="GeneID" id="9222948"/>
<dbReference type="VEuPathDB" id="FungiDB:MCYG_01626"/>
<dbReference type="eggNOG" id="KOG2100">
    <property type="taxonomic scope" value="Eukaryota"/>
</dbReference>
<dbReference type="HOGENOM" id="CLU_008615_0_1_1"/>
<dbReference type="OMA" id="YPVRYWD"/>
<dbReference type="OrthoDB" id="416344at2759"/>
<dbReference type="Proteomes" id="UP000002035">
    <property type="component" value="Unassembled WGS sequence"/>
</dbReference>
<dbReference type="GO" id="GO:0005576">
    <property type="term" value="C:extracellular region"/>
    <property type="evidence" value="ECO:0007669"/>
    <property type="project" value="UniProtKB-SubCell"/>
</dbReference>
<dbReference type="GO" id="GO:0004177">
    <property type="term" value="F:aminopeptidase activity"/>
    <property type="evidence" value="ECO:0007669"/>
    <property type="project" value="UniProtKB-KW"/>
</dbReference>
<dbReference type="GO" id="GO:0004252">
    <property type="term" value="F:serine-type endopeptidase activity"/>
    <property type="evidence" value="ECO:0007669"/>
    <property type="project" value="TreeGrafter"/>
</dbReference>
<dbReference type="GO" id="GO:0006508">
    <property type="term" value="P:proteolysis"/>
    <property type="evidence" value="ECO:0007669"/>
    <property type="project" value="UniProtKB-KW"/>
</dbReference>
<dbReference type="FunFam" id="3.40.50.1820:FF:000028">
    <property type="entry name" value="S9 family peptidase"/>
    <property type="match status" value="1"/>
</dbReference>
<dbReference type="Gene3D" id="3.40.50.1820">
    <property type="entry name" value="alpha/beta hydrolase"/>
    <property type="match status" value="1"/>
</dbReference>
<dbReference type="Gene3D" id="2.120.10.30">
    <property type="entry name" value="TolB, C-terminal domain"/>
    <property type="match status" value="1"/>
</dbReference>
<dbReference type="InterPro" id="IPR011042">
    <property type="entry name" value="6-blade_b-propeller_TolB-like"/>
</dbReference>
<dbReference type="InterPro" id="IPR029058">
    <property type="entry name" value="AB_hydrolase_fold"/>
</dbReference>
<dbReference type="InterPro" id="IPR011659">
    <property type="entry name" value="PD40"/>
</dbReference>
<dbReference type="InterPro" id="IPR001375">
    <property type="entry name" value="Peptidase_S9_cat"/>
</dbReference>
<dbReference type="PANTHER" id="PTHR42776:SF11">
    <property type="entry name" value="DIPEPTIDYL-PEPTIDASE 5-RELATED"/>
    <property type="match status" value="1"/>
</dbReference>
<dbReference type="PANTHER" id="PTHR42776">
    <property type="entry name" value="SERINE PEPTIDASE S9 FAMILY MEMBER"/>
    <property type="match status" value="1"/>
</dbReference>
<dbReference type="Pfam" id="PF07676">
    <property type="entry name" value="PD40"/>
    <property type="match status" value="1"/>
</dbReference>
<dbReference type="Pfam" id="PF00326">
    <property type="entry name" value="Peptidase_S9"/>
    <property type="match status" value="1"/>
</dbReference>
<dbReference type="SUPFAM" id="SSF53474">
    <property type="entry name" value="alpha/beta-Hydrolases"/>
    <property type="match status" value="1"/>
</dbReference>
<dbReference type="SUPFAM" id="SSF69322">
    <property type="entry name" value="Tricorn protease domain 2"/>
    <property type="match status" value="1"/>
</dbReference>